<organism>
    <name type="scientific">Caenorhabditis briggsae</name>
    <dbReference type="NCBI Taxonomy" id="6238"/>
    <lineage>
        <taxon>Eukaryota</taxon>
        <taxon>Metazoa</taxon>
        <taxon>Ecdysozoa</taxon>
        <taxon>Nematoda</taxon>
        <taxon>Chromadorea</taxon>
        <taxon>Rhabditida</taxon>
        <taxon>Rhabditina</taxon>
        <taxon>Rhabditomorpha</taxon>
        <taxon>Rhabditoidea</taxon>
        <taxon>Rhabditidae</taxon>
        <taxon>Peloderinae</taxon>
        <taxon>Caenorhabditis</taxon>
    </lineage>
</organism>
<sequence length="319" mass="35834">MSPSDDPISSIFFERQQAALCAQHALNMLLQDSLFTYENLRDLARQMDQMEHDILGNNANAVGRSENMNDSGFFSIQVIEKALETFDLKLINMENPAMAEFKANPLTARAYVLNLREHWFVLRKFGNQWFELNSVKNGPKLLTDTYVKEYLHQFAAENYSIFVVQGILPNSEADDFITLCPVVPKPTDFDKKEPNLVQKFFNSVGRRLGGSQEIPDSQEDRDLAIAMALSMESKESSESSGSDEDQLAKAIEMSLSQDPNIPSTSAAPSELTETPILGPSTSSETPSGRIPSAEQQRRDRAKFLEKLEEEKKSQNVPEE</sequence>
<evidence type="ECO:0000250" key="1">
    <source>
        <dbReference type="UniProtKB" id="O17850"/>
    </source>
</evidence>
<evidence type="ECO:0000250" key="2">
    <source>
        <dbReference type="UniProtKB" id="P54252"/>
    </source>
</evidence>
<evidence type="ECO:0000255" key="3">
    <source>
        <dbReference type="PROSITE-ProRule" id="PRU00213"/>
    </source>
</evidence>
<evidence type="ECO:0000255" key="4">
    <source>
        <dbReference type="PROSITE-ProRule" id="PRU00331"/>
    </source>
</evidence>
<evidence type="ECO:0000256" key="5">
    <source>
        <dbReference type="SAM" id="MobiDB-lite"/>
    </source>
</evidence>
<comment type="function">
    <text evidence="1 2">Acts as a chain editing deubiquitinating enzyme that binds and cleaves 'Lys-48'-linked polyubiquitin chains, with a preference for chains containing four or more ubiquitin molecules thereby modulating protein degradation by the ubiquitin-proteasome pathway. Probably by regulating the IGF-1-insulin-like pathway, regulates lifespan. Regulates germline DNA double-strand-break repair and apoptosis in response to DNA damage by recruiting E4 ubiquitin-protein ligase ufd-2 to DNA repair foci. Interacts with key regulators of transcription and represses transcription. Acts as a histone-binding protein that regulates transcription.</text>
</comment>
<comment type="catalytic activity">
    <reaction evidence="1">
        <text>Thiol-dependent hydrolysis of ester, thioester, amide, peptide and isopeptide bonds formed by the C-terminal Gly of ubiquitin (a 76-residue protein attached to proteins as an intracellular targeting signal).</text>
        <dbReference type="EC" id="3.4.19.12"/>
    </reaction>
</comment>
<comment type="subunit">
    <text evidence="1">Forms a complex composed of deubiquitinating enzyme atx-3, adapter ubxn-5 and cdc-48.1. Forms a complex composed of deubiquitinating enzyme atx-3, E4 ubiquitin-protein ligase ufd-2 and cdc-48.1. Interacts (via RRDR motif) with cdc-48.1 (via N-terminus) and cdc-48.2 (via N-terminus); the interaction with cdc-48.1 is not required for atx-3 enzymatic activity. Interacts (via C-terminus) with ubxn-5. May interact with ned-8.</text>
</comment>
<comment type="subcellular location">
    <subcellularLocation>
        <location evidence="1">Cytoplasm</location>
    </subcellularLocation>
    <subcellularLocation>
        <location evidence="1">Nucleus</location>
    </subcellularLocation>
    <subcellularLocation>
        <location evidence="1">Nucleus</location>
        <location evidence="1">Nucleolus</location>
    </subcellularLocation>
    <text evidence="1">Localizes predominantly in the cytoplasm. In the germline, following ionizing radiation-induced DNA damage, localizes to foci within nucleoli where it colocalizes with cdc-48.1 and/or cdc-48.2 and ufd-2, proteasome alpha subunit and ubiquitinated proteins.</text>
</comment>
<reference key="1">
    <citation type="journal article" date="2003" name="PLoS Biol.">
        <title>The genome sequence of Caenorhabditis briggsae: a platform for comparative genomics.</title>
        <authorList>
            <person name="Stein L.D."/>
            <person name="Bao Z."/>
            <person name="Blasiar D."/>
            <person name="Blumenthal T."/>
            <person name="Brent M.R."/>
            <person name="Chen N."/>
            <person name="Chinwalla A."/>
            <person name="Clarke L."/>
            <person name="Clee C."/>
            <person name="Coghlan A."/>
            <person name="Coulson A."/>
            <person name="D'Eustachio P."/>
            <person name="Fitch D.H.A."/>
            <person name="Fulton L.A."/>
            <person name="Fulton R.E."/>
            <person name="Griffiths-Jones S."/>
            <person name="Harris T.W."/>
            <person name="Hillier L.W."/>
            <person name="Kamath R."/>
            <person name="Kuwabara P.E."/>
            <person name="Mardis E.R."/>
            <person name="Marra M.A."/>
            <person name="Miner T.L."/>
            <person name="Minx P."/>
            <person name="Mullikin J.C."/>
            <person name="Plumb R.W."/>
            <person name="Rogers J."/>
            <person name="Schein J.E."/>
            <person name="Sohrmann M."/>
            <person name="Spieth J."/>
            <person name="Stajich J.E."/>
            <person name="Wei C."/>
            <person name="Willey D."/>
            <person name="Wilson R.K."/>
            <person name="Durbin R.M."/>
            <person name="Waterston R.H."/>
        </authorList>
    </citation>
    <scope>NUCLEOTIDE SEQUENCE [LARGE SCALE GENOMIC DNA]</scope>
    <source>
        <strain>AF16</strain>
    </source>
</reference>
<protein>
    <recommendedName>
        <fullName>Ataxin-3 homolog</fullName>
        <ecNumber evidence="1">3.4.19.12</ecNumber>
    </recommendedName>
    <alternativeName>
        <fullName>Machado-Joseph disease-like protein</fullName>
    </alternativeName>
</protein>
<name>ATX3_CAEBR</name>
<accession>Q60XN1</accession>
<accession>A8XTP1</accession>
<dbReference type="EC" id="3.4.19.12" evidence="1"/>
<dbReference type="EMBL" id="HE601466">
    <property type="protein sequence ID" value="CAP36017.3"/>
    <property type="molecule type" value="Genomic_DNA"/>
</dbReference>
<dbReference type="SMR" id="Q60XN1"/>
<dbReference type="FunCoup" id="Q60XN1">
    <property type="interactions" value="1705"/>
</dbReference>
<dbReference type="STRING" id="6238.Q60XN1"/>
<dbReference type="MEROPS" id="C86.003"/>
<dbReference type="EnsemblMetazoa" id="CBG18600.1">
    <property type="protein sequence ID" value="CBG18600.1"/>
    <property type="gene ID" value="WBGene00037987"/>
</dbReference>
<dbReference type="KEGG" id="cbr:CBG_18600"/>
<dbReference type="CTD" id="8580388"/>
<dbReference type="WormBase" id="CBG18600">
    <property type="protein sequence ID" value="CBP10927"/>
    <property type="gene ID" value="WBGene00037987"/>
    <property type="gene designation" value="Cbr-atx-3"/>
</dbReference>
<dbReference type="eggNOG" id="KOG2935">
    <property type="taxonomic scope" value="Eukaryota"/>
</dbReference>
<dbReference type="HOGENOM" id="CLU_031228_1_1_1"/>
<dbReference type="InParanoid" id="Q60XN1"/>
<dbReference type="OMA" id="LGQAYIC"/>
<dbReference type="Proteomes" id="UP000008549">
    <property type="component" value="Unassembled WGS sequence"/>
</dbReference>
<dbReference type="GO" id="GO:0005737">
    <property type="term" value="C:cytoplasm"/>
    <property type="evidence" value="ECO:0007669"/>
    <property type="project" value="UniProtKB-SubCell"/>
</dbReference>
<dbReference type="GO" id="GO:0005730">
    <property type="term" value="C:nucleolus"/>
    <property type="evidence" value="ECO:0007669"/>
    <property type="project" value="UniProtKB-SubCell"/>
</dbReference>
<dbReference type="GO" id="GO:0005634">
    <property type="term" value="C:nucleus"/>
    <property type="evidence" value="ECO:0000318"/>
    <property type="project" value="GO_Central"/>
</dbReference>
<dbReference type="GO" id="GO:0045202">
    <property type="term" value="C:synapse"/>
    <property type="evidence" value="ECO:0007669"/>
    <property type="project" value="GOC"/>
</dbReference>
<dbReference type="GO" id="GO:0004843">
    <property type="term" value="F:cysteine-type deubiquitinase activity"/>
    <property type="evidence" value="ECO:0000318"/>
    <property type="project" value="GO_Central"/>
</dbReference>
<dbReference type="GO" id="GO:0007268">
    <property type="term" value="P:chemical synaptic transmission"/>
    <property type="evidence" value="ECO:0007669"/>
    <property type="project" value="EnsemblMetazoa"/>
</dbReference>
<dbReference type="GO" id="GO:1904262">
    <property type="term" value="P:negative regulation of TORC1 signaling"/>
    <property type="evidence" value="ECO:0000318"/>
    <property type="project" value="GO_Central"/>
</dbReference>
<dbReference type="GO" id="GO:1904294">
    <property type="term" value="P:positive regulation of ERAD pathway"/>
    <property type="evidence" value="ECO:0000318"/>
    <property type="project" value="GO_Central"/>
</dbReference>
<dbReference type="GO" id="GO:0043161">
    <property type="term" value="P:proteasome-mediated ubiquitin-dependent protein catabolic process"/>
    <property type="evidence" value="ECO:0000318"/>
    <property type="project" value="GO_Central"/>
</dbReference>
<dbReference type="GO" id="GO:0016579">
    <property type="term" value="P:protein deubiquitination"/>
    <property type="evidence" value="ECO:0007669"/>
    <property type="project" value="InterPro"/>
</dbReference>
<dbReference type="GO" id="GO:0006515">
    <property type="term" value="P:protein quality control for misfolded or incompletely synthesized proteins"/>
    <property type="evidence" value="ECO:0000318"/>
    <property type="project" value="GO_Central"/>
</dbReference>
<dbReference type="FunFam" id="1.10.287.10:FF:000018">
    <property type="entry name" value="Ataxin-3 homolog"/>
    <property type="match status" value="1"/>
</dbReference>
<dbReference type="Gene3D" id="3.90.70.40">
    <property type="match status" value="1"/>
</dbReference>
<dbReference type="Gene3D" id="1.10.287.10">
    <property type="entry name" value="S15/NS1, RNA-binding"/>
    <property type="match status" value="1"/>
</dbReference>
<dbReference type="InterPro" id="IPR033865">
    <property type="entry name" value="Ataxin-3"/>
</dbReference>
<dbReference type="InterPro" id="IPR006155">
    <property type="entry name" value="Josephin"/>
</dbReference>
<dbReference type="InterPro" id="IPR003903">
    <property type="entry name" value="UIM_dom"/>
</dbReference>
<dbReference type="PANTHER" id="PTHR14159">
    <property type="entry name" value="ATAXIN-3-RELATED"/>
    <property type="match status" value="1"/>
</dbReference>
<dbReference type="PANTHER" id="PTHR14159:SF0">
    <property type="entry name" value="ATAXIN-3-RELATED"/>
    <property type="match status" value="1"/>
</dbReference>
<dbReference type="Pfam" id="PF02099">
    <property type="entry name" value="Josephin"/>
    <property type="match status" value="1"/>
</dbReference>
<dbReference type="Pfam" id="PF02809">
    <property type="entry name" value="UIM"/>
    <property type="match status" value="2"/>
</dbReference>
<dbReference type="PRINTS" id="PR01233">
    <property type="entry name" value="JOSEPHIN"/>
</dbReference>
<dbReference type="SMART" id="SM01246">
    <property type="entry name" value="Josephin"/>
    <property type="match status" value="1"/>
</dbReference>
<dbReference type="SMART" id="SM00726">
    <property type="entry name" value="UIM"/>
    <property type="match status" value="2"/>
</dbReference>
<dbReference type="PROSITE" id="PS50957">
    <property type="entry name" value="JOSEPHIN"/>
    <property type="match status" value="1"/>
</dbReference>
<dbReference type="PROSITE" id="PS50330">
    <property type="entry name" value="UIM"/>
    <property type="match status" value="1"/>
</dbReference>
<feature type="chain" id="PRO_0000232395" description="Ataxin-3 homolog">
    <location>
        <begin position="1"/>
        <end position="319"/>
    </location>
</feature>
<feature type="domain" description="Josephin" evidence="4">
    <location>
        <begin position="8"/>
        <end position="179"/>
    </location>
</feature>
<feature type="domain" description="UIM 1" evidence="3">
    <location>
        <begin position="218"/>
        <end position="237"/>
    </location>
</feature>
<feature type="domain" description="UIM 2" evidence="3">
    <location>
        <begin position="242"/>
        <end position="261"/>
    </location>
</feature>
<feature type="region of interest" description="Disordered" evidence="5">
    <location>
        <begin position="253"/>
        <end position="319"/>
    </location>
</feature>
<feature type="region of interest" description="Interaction with cdc-48.1 and cdc-48.2" evidence="1">
    <location>
        <begin position="297"/>
        <end position="300"/>
    </location>
</feature>
<feature type="compositionally biased region" description="Polar residues" evidence="5">
    <location>
        <begin position="254"/>
        <end position="267"/>
    </location>
</feature>
<feature type="compositionally biased region" description="Basic and acidic residues" evidence="5">
    <location>
        <begin position="295"/>
        <end position="313"/>
    </location>
</feature>
<feature type="active site" description="Nucleophile" evidence="4">
    <location>
        <position position="21"/>
    </location>
</feature>
<feature type="active site" description="Proton acceptor" evidence="4">
    <location>
        <position position="118"/>
    </location>
</feature>
<feature type="active site" evidence="2 4">
    <location>
        <position position="133"/>
    </location>
</feature>
<proteinExistence type="inferred from homology"/>
<keyword id="KW-0963">Cytoplasm</keyword>
<keyword id="KW-0378">Hydrolase</keyword>
<keyword id="KW-0539">Nucleus</keyword>
<keyword id="KW-0645">Protease</keyword>
<keyword id="KW-1185">Reference proteome</keyword>
<keyword id="KW-0677">Repeat</keyword>
<keyword id="KW-0788">Thiol protease</keyword>
<keyword id="KW-0804">Transcription</keyword>
<keyword id="KW-0805">Transcription regulation</keyword>
<keyword id="KW-0833">Ubl conjugation pathway</keyword>
<gene>
    <name evidence="1" type="primary">atx-3</name>
    <name type="ORF">CBG18600</name>
</gene>